<sequence length="255" mass="28309">MQVKRVKVFKIRNETEAVEDDFVAEEEPLEVRTCYDDCQTFAIIMRTPGNDKELVLGFLYSEGAIDTIDDVSSVSIKGDNVVEVRLNKPLKVKVREMIVNSSCGVCGRAFLYTLNILKCNTRVSRDVIFSLPEKLKENQEVFKITGGLHAAALFTTSGELNYLYEDVGRHNAVDKLIGRLLLERKIPASNYIMQVSGRLGYEIVSKGIKAGIPIICGISAPTSLAVDIAEEAGVTLIGFLRGNSFNIYTHKERVI</sequence>
<organism>
    <name type="scientific">Sulfurisphaera tokodaii (strain DSM 16993 / JCM 10545 / NBRC 100140 / 7)</name>
    <name type="common">Sulfolobus tokodaii</name>
    <dbReference type="NCBI Taxonomy" id="273063"/>
    <lineage>
        <taxon>Archaea</taxon>
        <taxon>Thermoproteota</taxon>
        <taxon>Thermoprotei</taxon>
        <taxon>Sulfolobales</taxon>
        <taxon>Sulfolobaceae</taxon>
        <taxon>Sulfurisphaera</taxon>
    </lineage>
</organism>
<proteinExistence type="inferred from homology"/>
<comment type="function">
    <text evidence="1">Required for formate dehydrogenase (FDH) activity. Acts as a sulfur carrier protein that transfers sulfur from IscS to the molybdenum cofactor prior to its insertion into FDH.</text>
</comment>
<comment type="subcellular location">
    <subcellularLocation>
        <location evidence="1">Cytoplasm</location>
    </subcellularLocation>
</comment>
<comment type="similarity">
    <text evidence="1">Belongs to the FdhD family.</text>
</comment>
<name>FDHD_SULTO</name>
<evidence type="ECO:0000255" key="1">
    <source>
        <dbReference type="HAMAP-Rule" id="MF_00187"/>
    </source>
</evidence>
<dbReference type="EMBL" id="BA000023">
    <property type="protein sequence ID" value="BAB65040.1"/>
    <property type="molecule type" value="Genomic_DNA"/>
</dbReference>
<dbReference type="RefSeq" id="WP_010978022.1">
    <property type="nucleotide sequence ID" value="NC_003106.2"/>
</dbReference>
<dbReference type="SMR" id="Q976V6"/>
<dbReference type="STRING" id="273063.STK_00840"/>
<dbReference type="GeneID" id="1457964"/>
<dbReference type="KEGG" id="sto:STK_00840"/>
<dbReference type="PATRIC" id="fig|273063.9.peg.106"/>
<dbReference type="eggNOG" id="arCOG04358">
    <property type="taxonomic scope" value="Archaea"/>
</dbReference>
<dbReference type="OrthoDB" id="57189at2157"/>
<dbReference type="Proteomes" id="UP000001015">
    <property type="component" value="Chromosome"/>
</dbReference>
<dbReference type="GO" id="GO:0005737">
    <property type="term" value="C:cytoplasm"/>
    <property type="evidence" value="ECO:0007669"/>
    <property type="project" value="UniProtKB-SubCell"/>
</dbReference>
<dbReference type="GO" id="GO:0097163">
    <property type="term" value="F:sulfur carrier activity"/>
    <property type="evidence" value="ECO:0007669"/>
    <property type="project" value="UniProtKB-UniRule"/>
</dbReference>
<dbReference type="GO" id="GO:0016783">
    <property type="term" value="F:sulfurtransferase activity"/>
    <property type="evidence" value="ECO:0007669"/>
    <property type="project" value="InterPro"/>
</dbReference>
<dbReference type="GO" id="GO:0006777">
    <property type="term" value="P:Mo-molybdopterin cofactor biosynthetic process"/>
    <property type="evidence" value="ECO:0007669"/>
    <property type="project" value="UniProtKB-UniRule"/>
</dbReference>
<dbReference type="Gene3D" id="3.10.20.10">
    <property type="match status" value="1"/>
</dbReference>
<dbReference type="Gene3D" id="3.40.140.10">
    <property type="entry name" value="Cytidine Deaminase, domain 2"/>
    <property type="match status" value="1"/>
</dbReference>
<dbReference type="HAMAP" id="MF_00187">
    <property type="entry name" value="FdhD"/>
    <property type="match status" value="1"/>
</dbReference>
<dbReference type="InterPro" id="IPR016193">
    <property type="entry name" value="Cytidine_deaminase-like"/>
</dbReference>
<dbReference type="InterPro" id="IPR003786">
    <property type="entry name" value="FdhD"/>
</dbReference>
<dbReference type="NCBIfam" id="TIGR00129">
    <property type="entry name" value="fdhD_narQ"/>
    <property type="match status" value="1"/>
</dbReference>
<dbReference type="PANTHER" id="PTHR30592">
    <property type="entry name" value="FORMATE DEHYDROGENASE"/>
    <property type="match status" value="1"/>
</dbReference>
<dbReference type="PANTHER" id="PTHR30592:SF1">
    <property type="entry name" value="SULFUR CARRIER PROTEIN FDHD"/>
    <property type="match status" value="1"/>
</dbReference>
<dbReference type="Pfam" id="PF02634">
    <property type="entry name" value="FdhD-NarQ"/>
    <property type="match status" value="1"/>
</dbReference>
<dbReference type="PIRSF" id="PIRSF015626">
    <property type="entry name" value="FdhD"/>
    <property type="match status" value="1"/>
</dbReference>
<dbReference type="SUPFAM" id="SSF53927">
    <property type="entry name" value="Cytidine deaminase-like"/>
    <property type="match status" value="1"/>
</dbReference>
<reference key="1">
    <citation type="journal article" date="2001" name="DNA Res.">
        <title>Complete genome sequence of an aerobic thermoacidophilic Crenarchaeon, Sulfolobus tokodaii strain7.</title>
        <authorList>
            <person name="Kawarabayasi Y."/>
            <person name="Hino Y."/>
            <person name="Horikawa H."/>
            <person name="Jin-no K."/>
            <person name="Takahashi M."/>
            <person name="Sekine M."/>
            <person name="Baba S."/>
            <person name="Ankai A."/>
            <person name="Kosugi H."/>
            <person name="Hosoyama A."/>
            <person name="Fukui S."/>
            <person name="Nagai Y."/>
            <person name="Nishijima K."/>
            <person name="Otsuka R."/>
            <person name="Nakazawa H."/>
            <person name="Takamiya M."/>
            <person name="Kato Y."/>
            <person name="Yoshizawa T."/>
            <person name="Tanaka T."/>
            <person name="Kudoh Y."/>
            <person name="Yamazaki J."/>
            <person name="Kushida N."/>
            <person name="Oguchi A."/>
            <person name="Aoki K."/>
            <person name="Masuda S."/>
            <person name="Yanagii M."/>
            <person name="Nishimura M."/>
            <person name="Yamagishi A."/>
            <person name="Oshima T."/>
            <person name="Kikuchi H."/>
        </authorList>
    </citation>
    <scope>NUCLEOTIDE SEQUENCE [LARGE SCALE GENOMIC DNA]</scope>
    <source>
        <strain>DSM 16993 / JCM 10545 / NBRC 100140 / 7</strain>
    </source>
</reference>
<protein>
    <recommendedName>
        <fullName evidence="1">Sulfur carrier protein FdhD</fullName>
    </recommendedName>
</protein>
<gene>
    <name evidence="1" type="primary">fdhD</name>
    <name type="ordered locus">STK_00840</name>
</gene>
<keyword id="KW-0963">Cytoplasm</keyword>
<keyword id="KW-0501">Molybdenum cofactor biosynthesis</keyword>
<keyword id="KW-1185">Reference proteome</keyword>
<feature type="chain" id="PRO_0000152941" description="Sulfur carrier protein FdhD">
    <location>
        <begin position="1"/>
        <end position="255"/>
    </location>
</feature>
<feature type="active site" description="Cysteine persulfide intermediate" evidence="1">
    <location>
        <position position="103"/>
    </location>
</feature>
<accession>Q976V6</accession>